<evidence type="ECO:0000255" key="1">
    <source>
        <dbReference type="HAMAP-Rule" id="MF_00785"/>
    </source>
</evidence>
<evidence type="ECO:0000269" key="2">
    <source>
    </source>
</evidence>
<evidence type="ECO:0000303" key="3">
    <source>
    </source>
</evidence>
<evidence type="ECO:0000312" key="4">
    <source>
        <dbReference type="EMBL" id="AAM06986.1"/>
    </source>
</evidence>
<keyword id="KW-0169">Cobalamin biosynthesis</keyword>
<keyword id="KW-0170">Cobalt</keyword>
<keyword id="KW-0456">Lyase</keyword>
<keyword id="KW-0479">Metal-binding</keyword>
<keyword id="KW-0484">Methanogenesis</keyword>
<keyword id="KW-0533">Nickel</keyword>
<keyword id="KW-1185">Reference proteome</keyword>
<dbReference type="EC" id="4.99.1.3" evidence="1"/>
<dbReference type="EC" id="4.99.1.11" evidence="1 2"/>
<dbReference type="EMBL" id="AE010299">
    <property type="protein sequence ID" value="AAM06986.1"/>
    <property type="molecule type" value="Genomic_DNA"/>
</dbReference>
<dbReference type="RefSeq" id="WP_011023539.1">
    <property type="nucleotide sequence ID" value="NC_003552.1"/>
</dbReference>
<dbReference type="SMR" id="Q8TJZ5"/>
<dbReference type="FunCoup" id="Q8TJZ5">
    <property type="interactions" value="94"/>
</dbReference>
<dbReference type="STRING" id="188937.MA_3631"/>
<dbReference type="EnsemblBacteria" id="AAM06986">
    <property type="protein sequence ID" value="AAM06986"/>
    <property type="gene ID" value="MA_3631"/>
</dbReference>
<dbReference type="GeneID" id="1475524"/>
<dbReference type="KEGG" id="mac:MA_3631"/>
<dbReference type="HOGENOM" id="CLU_065901_2_1_2"/>
<dbReference type="InParanoid" id="Q8TJZ5"/>
<dbReference type="OrthoDB" id="11653at2157"/>
<dbReference type="PhylomeDB" id="Q8TJZ5"/>
<dbReference type="BioCyc" id="MetaCyc:MONOMER-20113"/>
<dbReference type="UniPathway" id="UPA00148">
    <property type="reaction ID" value="UER00223"/>
</dbReference>
<dbReference type="Proteomes" id="UP000002487">
    <property type="component" value="Chromosome"/>
</dbReference>
<dbReference type="GO" id="GO:0050897">
    <property type="term" value="F:cobalt ion binding"/>
    <property type="evidence" value="ECO:0007669"/>
    <property type="project" value="UniProtKB-UniRule"/>
</dbReference>
<dbReference type="GO" id="GO:0016151">
    <property type="term" value="F:nickel cation binding"/>
    <property type="evidence" value="ECO:0007669"/>
    <property type="project" value="UniProtKB-UniRule"/>
</dbReference>
<dbReference type="GO" id="GO:0016852">
    <property type="term" value="F:sirohydrochlorin cobaltochelatase activity"/>
    <property type="evidence" value="ECO:0007669"/>
    <property type="project" value="UniProtKB-UniRule"/>
</dbReference>
<dbReference type="GO" id="GO:0019251">
    <property type="term" value="P:anaerobic cobalamin biosynthetic process"/>
    <property type="evidence" value="ECO:0007669"/>
    <property type="project" value="UniProtKB-UniRule"/>
</dbReference>
<dbReference type="GO" id="GO:0015948">
    <property type="term" value="P:methanogenesis"/>
    <property type="evidence" value="ECO:0007669"/>
    <property type="project" value="UniProtKB-KW"/>
</dbReference>
<dbReference type="CDD" id="cd03416">
    <property type="entry name" value="CbiX_SirB_N"/>
    <property type="match status" value="1"/>
</dbReference>
<dbReference type="Gene3D" id="3.40.50.1400">
    <property type="match status" value="1"/>
</dbReference>
<dbReference type="HAMAP" id="MF_00785">
    <property type="entry name" value="CbiX"/>
    <property type="match status" value="1"/>
</dbReference>
<dbReference type="InterPro" id="IPR002762">
    <property type="entry name" value="CbiX-like"/>
</dbReference>
<dbReference type="InterPro" id="IPR023652">
    <property type="entry name" value="SiroHydchlorin_Cochelatase"/>
</dbReference>
<dbReference type="InterPro" id="IPR050963">
    <property type="entry name" value="Sirohydro_Cobaltochel/CbiX"/>
</dbReference>
<dbReference type="NCBIfam" id="NF033198">
    <property type="entry name" value="F430_CfbA"/>
    <property type="match status" value="1"/>
</dbReference>
<dbReference type="NCBIfam" id="NF002090">
    <property type="entry name" value="PRK00923.1"/>
    <property type="match status" value="1"/>
</dbReference>
<dbReference type="PANTHER" id="PTHR33542">
    <property type="entry name" value="SIROHYDROCHLORIN FERROCHELATASE, CHLOROPLASTIC"/>
    <property type="match status" value="1"/>
</dbReference>
<dbReference type="PANTHER" id="PTHR33542:SF3">
    <property type="entry name" value="SIROHYDROCHLORIN FERROCHELATASE, CHLOROPLASTIC"/>
    <property type="match status" value="1"/>
</dbReference>
<dbReference type="Pfam" id="PF01903">
    <property type="entry name" value="CbiX"/>
    <property type="match status" value="1"/>
</dbReference>
<dbReference type="SUPFAM" id="SSF53800">
    <property type="entry name" value="Chelatase"/>
    <property type="match status" value="1"/>
</dbReference>
<name>CFBA_METAC</name>
<comment type="function">
    <text evidence="1 2">Catalyzes the insertion of Co(2+) into sirohydrochlorin as part of the anaerobic pathway to cobalamin biosynthesis (Potential). Involved in the biosynthesis of the unique nickel-containing tetrapyrrole coenzyme F430, the prosthetic group of methyl-coenzyme M reductase (MCR), which plays a key role in methanogenesis and anaerobic methane oxidation (PubMed:27846569). Catalyzes the insertion of Ni(2+) into sirohydrochlorin to yield Ni-sirohydrochlorin (PubMed:27846569).</text>
</comment>
<comment type="catalytic activity">
    <reaction evidence="1">
        <text>Co-sirohydrochlorin + 2 H(+) = sirohydrochlorin + Co(2+)</text>
        <dbReference type="Rhea" id="RHEA:15893"/>
        <dbReference type="ChEBI" id="CHEBI:15378"/>
        <dbReference type="ChEBI" id="CHEBI:48828"/>
        <dbReference type="ChEBI" id="CHEBI:58351"/>
        <dbReference type="ChEBI" id="CHEBI:60049"/>
        <dbReference type="EC" id="4.99.1.3"/>
    </reaction>
</comment>
<comment type="catalytic activity">
    <reaction evidence="1 2">
        <text>Ni-sirohydrochlorin + 2 H(+) = sirohydrochlorin + Ni(2+)</text>
        <dbReference type="Rhea" id="RHEA:52796"/>
        <dbReference type="ChEBI" id="CHEBI:15378"/>
        <dbReference type="ChEBI" id="CHEBI:49786"/>
        <dbReference type="ChEBI" id="CHEBI:58351"/>
        <dbReference type="ChEBI" id="CHEBI:136841"/>
        <dbReference type="EC" id="4.99.1.11"/>
    </reaction>
</comment>
<comment type="pathway">
    <text evidence="1">Cofactor biosynthesis; adenosylcobalamin biosynthesis; cob(II)yrinate a,c-diamide from sirohydrochlorin (anaerobic route): step 1/10.</text>
</comment>
<comment type="subunit">
    <text evidence="1">Homotetramer; dimer of dimers.</text>
</comment>
<comment type="similarity">
    <text evidence="1">Belongs to the CbiX family. CbiXS subfamily.</text>
</comment>
<organism>
    <name type="scientific">Methanosarcina acetivorans (strain ATCC 35395 / DSM 2834 / JCM 12185 / C2A)</name>
    <dbReference type="NCBI Taxonomy" id="188937"/>
    <lineage>
        <taxon>Archaea</taxon>
        <taxon>Methanobacteriati</taxon>
        <taxon>Methanobacteriota</taxon>
        <taxon>Stenosarchaea group</taxon>
        <taxon>Methanomicrobia</taxon>
        <taxon>Methanosarcinales</taxon>
        <taxon>Methanosarcinaceae</taxon>
        <taxon>Methanosarcina</taxon>
    </lineage>
</organism>
<feature type="chain" id="PRO_0000150354" description="Sirohydrochlorin cobaltochelatase">
    <location>
        <begin position="1"/>
        <end position="130"/>
    </location>
</feature>
<feature type="active site" description="Proton acceptor" evidence="1">
    <location>
        <position position="12"/>
    </location>
</feature>
<feature type="binding site" evidence="1">
    <location>
        <position position="12"/>
    </location>
    <ligand>
        <name>Co(2+)</name>
        <dbReference type="ChEBI" id="CHEBI:48828"/>
    </ligand>
</feature>
<feature type="binding site" evidence="1">
    <location>
        <position position="12"/>
    </location>
    <ligand>
        <name>Ni(2+)</name>
        <dbReference type="ChEBI" id="CHEBI:49786"/>
    </ligand>
</feature>
<feature type="binding site" evidence="1">
    <location>
        <position position="48"/>
    </location>
    <ligand>
        <name>substrate</name>
    </ligand>
</feature>
<feature type="binding site" evidence="1">
    <location>
        <begin position="73"/>
        <end position="78"/>
    </location>
    <ligand>
        <name>substrate</name>
    </ligand>
</feature>
<feature type="binding site" evidence="1">
    <location>
        <position position="78"/>
    </location>
    <ligand>
        <name>Co(2+)</name>
        <dbReference type="ChEBI" id="CHEBI:48828"/>
    </ligand>
</feature>
<feature type="binding site" evidence="1">
    <location>
        <position position="78"/>
    </location>
    <ligand>
        <name>Ni(2+)</name>
        <dbReference type="ChEBI" id="CHEBI:49786"/>
    </ligand>
</feature>
<proteinExistence type="evidence at protein level"/>
<protein>
    <recommendedName>
        <fullName evidence="1">Sirohydrochlorin cobaltochelatase</fullName>
        <ecNumber evidence="1">4.99.1.3</ecNumber>
    </recommendedName>
    <alternativeName>
        <fullName evidence="1">CbiXS</fullName>
    </alternativeName>
    <alternativeName>
        <fullName evidence="1 3">Sirohydrochlorin nickelchelatase</fullName>
        <ecNumber evidence="1 2">4.99.1.11</ecNumber>
    </alternativeName>
</protein>
<accession>Q8TJZ5</accession>
<sequence length="130" mass="13746">MTEKLGILAIGHGSKLPYNKEVVSQIADYIAQKHSDVVVRAGFMENSEPTLEEAIAGFAGTGVTKIAAVPVFLASGVHITKDIPGILSLDEKGCGILNIDGKDVPLCYAKPLGADELIADLVFKRVQEAL</sequence>
<gene>
    <name evidence="1" type="primary">cbiX</name>
    <name evidence="1 3" type="synonym">cfbA</name>
    <name evidence="4" type="ordered locus">MA_3631</name>
</gene>
<reference key="1">
    <citation type="journal article" date="2002" name="Genome Res.">
        <title>The genome of Methanosarcina acetivorans reveals extensive metabolic and physiological diversity.</title>
        <authorList>
            <person name="Galagan J.E."/>
            <person name="Nusbaum C."/>
            <person name="Roy A."/>
            <person name="Endrizzi M.G."/>
            <person name="Macdonald P."/>
            <person name="FitzHugh W."/>
            <person name="Calvo S."/>
            <person name="Engels R."/>
            <person name="Smirnov S."/>
            <person name="Atnoor D."/>
            <person name="Brown A."/>
            <person name="Allen N."/>
            <person name="Naylor J."/>
            <person name="Stange-Thomann N."/>
            <person name="DeArellano K."/>
            <person name="Johnson R."/>
            <person name="Linton L."/>
            <person name="McEwan P."/>
            <person name="McKernan K."/>
            <person name="Talamas J."/>
            <person name="Tirrell A."/>
            <person name="Ye W."/>
            <person name="Zimmer A."/>
            <person name="Barber R.D."/>
            <person name="Cann I."/>
            <person name="Graham D.E."/>
            <person name="Grahame D.A."/>
            <person name="Guss A.M."/>
            <person name="Hedderich R."/>
            <person name="Ingram-Smith C."/>
            <person name="Kuettner H.C."/>
            <person name="Krzycki J.A."/>
            <person name="Leigh J.A."/>
            <person name="Li W."/>
            <person name="Liu J."/>
            <person name="Mukhopadhyay B."/>
            <person name="Reeve J.N."/>
            <person name="Smith K."/>
            <person name="Springer T.A."/>
            <person name="Umayam L.A."/>
            <person name="White O."/>
            <person name="White R.H."/>
            <person name="de Macario E.C."/>
            <person name="Ferry J.G."/>
            <person name="Jarrell K.F."/>
            <person name="Jing H."/>
            <person name="Macario A.J.L."/>
            <person name="Paulsen I.T."/>
            <person name="Pritchett M."/>
            <person name="Sowers K.R."/>
            <person name="Swanson R.V."/>
            <person name="Zinder S.H."/>
            <person name="Lander E."/>
            <person name="Metcalf W.W."/>
            <person name="Birren B."/>
        </authorList>
    </citation>
    <scope>NUCLEOTIDE SEQUENCE [LARGE SCALE GENOMIC DNA]</scope>
    <source>
        <strain>ATCC 35395 / DSM 2834 / JCM 12185 / C2A</strain>
    </source>
</reference>
<reference key="2">
    <citation type="journal article" date="2016" name="Science">
        <title>The biosynthetic pathway of coenzyme F430 in methanogenic and methanotrophic archaea.</title>
        <authorList>
            <person name="Zheng K."/>
            <person name="Ngo P.D."/>
            <person name="Owens V.L."/>
            <person name="Yang X.P."/>
            <person name="Mansoorabadi S.O."/>
        </authorList>
    </citation>
    <scope>FUNCTION AS A SIROHYDROCHLORIN NICKELCHELATASE</scope>
    <scope>CATALYTIC ACTIVITY</scope>
    <source>
        <strain>ATCC 35395 / DSM 2834 / JCM 12185 / C2A</strain>
    </source>
</reference>